<evidence type="ECO:0000255" key="1">
    <source>
        <dbReference type="HAMAP-Rule" id="MF_00374"/>
    </source>
</evidence>
<evidence type="ECO:0000305" key="2"/>
<reference key="1">
    <citation type="journal article" date="2003" name="Nature">
        <title>Genome sequence of Bacillus cereus and comparative analysis with Bacillus anthracis.</title>
        <authorList>
            <person name="Ivanova N."/>
            <person name="Sorokin A."/>
            <person name="Anderson I."/>
            <person name="Galleron N."/>
            <person name="Candelon B."/>
            <person name="Kapatral V."/>
            <person name="Bhattacharyya A."/>
            <person name="Reznik G."/>
            <person name="Mikhailova N."/>
            <person name="Lapidus A."/>
            <person name="Chu L."/>
            <person name="Mazur M."/>
            <person name="Goltsman E."/>
            <person name="Larsen N."/>
            <person name="D'Souza M."/>
            <person name="Walunas T."/>
            <person name="Grechkin Y."/>
            <person name="Pusch G."/>
            <person name="Haselkorn R."/>
            <person name="Fonstein M."/>
            <person name="Ehrlich S.D."/>
            <person name="Overbeek R."/>
            <person name="Kyrpides N.C."/>
        </authorList>
    </citation>
    <scope>NUCLEOTIDE SEQUENCE [LARGE SCALE GENOMIC DNA]</scope>
    <source>
        <strain>ATCC 14579 / DSM 31 / CCUG 7414 / JCM 2152 / NBRC 15305 / NCIMB 9373 / NCTC 2599 / NRRL B-3711</strain>
    </source>
</reference>
<name>RL29_BACCR</name>
<comment type="similarity">
    <text evidence="1">Belongs to the universal ribosomal protein uL29 family.</text>
</comment>
<keyword id="KW-1185">Reference proteome</keyword>
<keyword id="KW-0687">Ribonucleoprotein</keyword>
<keyword id="KW-0689">Ribosomal protein</keyword>
<proteinExistence type="inferred from homology"/>
<gene>
    <name evidence="1" type="primary">rpmC</name>
    <name type="ordered locus">BC_0139</name>
</gene>
<protein>
    <recommendedName>
        <fullName evidence="1">Large ribosomal subunit protein uL29</fullName>
    </recommendedName>
    <alternativeName>
        <fullName evidence="2">50S ribosomal protein L29</fullName>
    </alternativeName>
</protein>
<feature type="chain" id="PRO_0000130349" description="Large ribosomal subunit protein uL29">
    <location>
        <begin position="1"/>
        <end position="63"/>
    </location>
</feature>
<accession>Q81J34</accession>
<dbReference type="EMBL" id="AE016877">
    <property type="protein sequence ID" value="AAP07220.1"/>
    <property type="molecule type" value="Genomic_DNA"/>
</dbReference>
<dbReference type="RefSeq" id="NP_830019.1">
    <property type="nucleotide sequence ID" value="NC_004722.1"/>
</dbReference>
<dbReference type="SMR" id="Q81J34"/>
<dbReference type="STRING" id="226900.BC_0139"/>
<dbReference type="KEGG" id="bce:BC0139"/>
<dbReference type="PATRIC" id="fig|226900.8.peg.140"/>
<dbReference type="HOGENOM" id="CLU_158491_5_2_9"/>
<dbReference type="Proteomes" id="UP000001417">
    <property type="component" value="Chromosome"/>
</dbReference>
<dbReference type="GO" id="GO:0022625">
    <property type="term" value="C:cytosolic large ribosomal subunit"/>
    <property type="evidence" value="ECO:0000318"/>
    <property type="project" value="GO_Central"/>
</dbReference>
<dbReference type="GO" id="GO:0003735">
    <property type="term" value="F:structural constituent of ribosome"/>
    <property type="evidence" value="ECO:0007669"/>
    <property type="project" value="InterPro"/>
</dbReference>
<dbReference type="GO" id="GO:0006412">
    <property type="term" value="P:translation"/>
    <property type="evidence" value="ECO:0007669"/>
    <property type="project" value="UniProtKB-UniRule"/>
</dbReference>
<dbReference type="CDD" id="cd00427">
    <property type="entry name" value="Ribosomal_L29_HIP"/>
    <property type="match status" value="1"/>
</dbReference>
<dbReference type="FunFam" id="1.10.287.310:FF:000001">
    <property type="entry name" value="50S ribosomal protein L29"/>
    <property type="match status" value="1"/>
</dbReference>
<dbReference type="Gene3D" id="1.10.287.310">
    <property type="match status" value="1"/>
</dbReference>
<dbReference type="HAMAP" id="MF_00374">
    <property type="entry name" value="Ribosomal_uL29"/>
    <property type="match status" value="1"/>
</dbReference>
<dbReference type="InterPro" id="IPR050063">
    <property type="entry name" value="Ribosomal_protein_uL29"/>
</dbReference>
<dbReference type="InterPro" id="IPR001854">
    <property type="entry name" value="Ribosomal_uL29"/>
</dbReference>
<dbReference type="InterPro" id="IPR018254">
    <property type="entry name" value="Ribosomal_uL29_CS"/>
</dbReference>
<dbReference type="InterPro" id="IPR036049">
    <property type="entry name" value="Ribosomal_uL29_sf"/>
</dbReference>
<dbReference type="NCBIfam" id="TIGR00012">
    <property type="entry name" value="L29"/>
    <property type="match status" value="1"/>
</dbReference>
<dbReference type="PANTHER" id="PTHR10916">
    <property type="entry name" value="60S RIBOSOMAL PROTEIN L35/50S RIBOSOMAL PROTEIN L29"/>
    <property type="match status" value="1"/>
</dbReference>
<dbReference type="PANTHER" id="PTHR10916:SF0">
    <property type="entry name" value="LARGE RIBOSOMAL SUBUNIT PROTEIN UL29C"/>
    <property type="match status" value="1"/>
</dbReference>
<dbReference type="Pfam" id="PF00831">
    <property type="entry name" value="Ribosomal_L29"/>
    <property type="match status" value="1"/>
</dbReference>
<dbReference type="SUPFAM" id="SSF46561">
    <property type="entry name" value="Ribosomal protein L29 (L29p)"/>
    <property type="match status" value="1"/>
</dbReference>
<dbReference type="PROSITE" id="PS00579">
    <property type="entry name" value="RIBOSOMAL_L29"/>
    <property type="match status" value="1"/>
</dbReference>
<sequence length="63" mass="7354">MIFSELTTAEIETKVKALKEELFNLRLQLATGQLENPTRIREVRKAIARMKTVVREREIGINR</sequence>
<organism>
    <name type="scientific">Bacillus cereus (strain ATCC 14579 / DSM 31 / CCUG 7414 / JCM 2152 / NBRC 15305 / NCIMB 9373 / NCTC 2599 / NRRL B-3711)</name>
    <dbReference type="NCBI Taxonomy" id="226900"/>
    <lineage>
        <taxon>Bacteria</taxon>
        <taxon>Bacillati</taxon>
        <taxon>Bacillota</taxon>
        <taxon>Bacilli</taxon>
        <taxon>Bacillales</taxon>
        <taxon>Bacillaceae</taxon>
        <taxon>Bacillus</taxon>
        <taxon>Bacillus cereus group</taxon>
    </lineage>
</organism>